<protein>
    <recommendedName>
        <fullName>Methyl viologen resistance protein SmvA</fullName>
    </recommendedName>
</protein>
<accession>P37594</accession>
<dbReference type="EMBL" id="D26057">
    <property type="protein sequence ID" value="BAA05055.1"/>
    <property type="molecule type" value="Genomic_DNA"/>
</dbReference>
<dbReference type="EMBL" id="AE006468">
    <property type="protein sequence ID" value="AAL20492.1"/>
    <property type="molecule type" value="Genomic_DNA"/>
</dbReference>
<dbReference type="RefSeq" id="NP_460533.1">
    <property type="nucleotide sequence ID" value="NC_003197.2"/>
</dbReference>
<dbReference type="RefSeq" id="WP_000489731.1">
    <property type="nucleotide sequence ID" value="NC_003197.2"/>
</dbReference>
<dbReference type="SMR" id="P37594"/>
<dbReference type="STRING" id="99287.STM1574"/>
<dbReference type="TCDB" id="2.A.1.3.14">
    <property type="family name" value="the major facilitator superfamily (mfs)"/>
</dbReference>
<dbReference type="PaxDb" id="99287-STM1574"/>
<dbReference type="GeneID" id="1253092"/>
<dbReference type="KEGG" id="stm:STM1574"/>
<dbReference type="PATRIC" id="fig|99287.12.peg.1665"/>
<dbReference type="HOGENOM" id="CLU_000960_28_2_6"/>
<dbReference type="OMA" id="NLFHDPR"/>
<dbReference type="PhylomeDB" id="P37594"/>
<dbReference type="BioCyc" id="SENT99287:STM1574-MONOMER"/>
<dbReference type="Proteomes" id="UP000001014">
    <property type="component" value="Chromosome"/>
</dbReference>
<dbReference type="GO" id="GO:0016020">
    <property type="term" value="C:membrane"/>
    <property type="evidence" value="ECO:0000318"/>
    <property type="project" value="GO_Central"/>
</dbReference>
<dbReference type="GO" id="GO:0005886">
    <property type="term" value="C:plasma membrane"/>
    <property type="evidence" value="ECO:0007669"/>
    <property type="project" value="UniProtKB-SubCell"/>
</dbReference>
<dbReference type="GO" id="GO:0022857">
    <property type="term" value="F:transmembrane transporter activity"/>
    <property type="evidence" value="ECO:0007669"/>
    <property type="project" value="InterPro"/>
</dbReference>
<dbReference type="CDD" id="cd17321">
    <property type="entry name" value="MFS_MMR_MDR_like"/>
    <property type="match status" value="1"/>
</dbReference>
<dbReference type="Gene3D" id="1.20.1250.20">
    <property type="entry name" value="MFS general substrate transporter like domains"/>
    <property type="match status" value="1"/>
</dbReference>
<dbReference type="Gene3D" id="1.20.1720.10">
    <property type="entry name" value="Multidrug resistance protein D"/>
    <property type="match status" value="1"/>
</dbReference>
<dbReference type="InterPro" id="IPR011701">
    <property type="entry name" value="MFS"/>
</dbReference>
<dbReference type="InterPro" id="IPR020846">
    <property type="entry name" value="MFS_dom"/>
</dbReference>
<dbReference type="InterPro" id="IPR036259">
    <property type="entry name" value="MFS_trans_sf"/>
</dbReference>
<dbReference type="NCBIfam" id="NF011571">
    <property type="entry name" value="PRK14995.1"/>
    <property type="match status" value="1"/>
</dbReference>
<dbReference type="PANTHER" id="PTHR42718">
    <property type="entry name" value="MAJOR FACILITATOR SUPERFAMILY MULTIDRUG TRANSPORTER MFSC"/>
    <property type="match status" value="1"/>
</dbReference>
<dbReference type="PANTHER" id="PTHR42718:SF47">
    <property type="entry name" value="METHYL VIOLOGEN RESISTANCE PROTEIN SMVA"/>
    <property type="match status" value="1"/>
</dbReference>
<dbReference type="Pfam" id="PF07690">
    <property type="entry name" value="MFS_1"/>
    <property type="match status" value="1"/>
</dbReference>
<dbReference type="PRINTS" id="PR01036">
    <property type="entry name" value="TCRTETB"/>
</dbReference>
<dbReference type="SUPFAM" id="SSF103473">
    <property type="entry name" value="MFS general substrate transporter"/>
    <property type="match status" value="1"/>
</dbReference>
<dbReference type="PROSITE" id="PS50850">
    <property type="entry name" value="MFS"/>
    <property type="match status" value="1"/>
</dbReference>
<feature type="chain" id="PRO_0000173381" description="Methyl viologen resistance protein SmvA">
    <location>
        <begin position="1"/>
        <end position="495"/>
    </location>
</feature>
<feature type="transmembrane region" description="Helical" evidence="2">
    <location>
        <begin position="5"/>
        <end position="25"/>
    </location>
</feature>
<feature type="transmembrane region" description="Helical" evidence="2">
    <location>
        <begin position="44"/>
        <end position="64"/>
    </location>
</feature>
<feature type="transmembrane region" description="Helical" evidence="2">
    <location>
        <begin position="73"/>
        <end position="93"/>
    </location>
</feature>
<feature type="transmembrane region" description="Helical" evidence="2">
    <location>
        <begin position="96"/>
        <end position="116"/>
    </location>
</feature>
<feature type="transmembrane region" description="Helical" evidence="2">
    <location>
        <begin position="135"/>
        <end position="155"/>
    </location>
</feature>
<feature type="transmembrane region" description="Helical" evidence="2">
    <location>
        <begin position="158"/>
        <end position="178"/>
    </location>
</feature>
<feature type="transmembrane region" description="Helical" evidence="2">
    <location>
        <begin position="192"/>
        <end position="212"/>
    </location>
</feature>
<feature type="transmembrane region" description="Helical" evidence="2">
    <location>
        <begin position="220"/>
        <end position="240"/>
    </location>
</feature>
<feature type="transmembrane region" description="Helical" evidence="2">
    <location>
        <begin position="260"/>
        <end position="280"/>
    </location>
</feature>
<feature type="transmembrane region" description="Helical" evidence="2">
    <location>
        <begin position="299"/>
        <end position="319"/>
    </location>
</feature>
<feature type="transmembrane region" description="Helical" evidence="2">
    <location>
        <begin position="327"/>
        <end position="347"/>
    </location>
</feature>
<feature type="transmembrane region" description="Helical" evidence="2">
    <location>
        <begin position="357"/>
        <end position="377"/>
    </location>
</feature>
<feature type="transmembrane region" description="Helical" evidence="2">
    <location>
        <begin position="391"/>
        <end position="411"/>
    </location>
</feature>
<feature type="transmembrane region" description="Helical" evidence="2">
    <location>
        <begin position="469"/>
        <end position="489"/>
    </location>
</feature>
<feature type="sequence conflict" description="In Ref. 1; BAA05055." evidence="3" ref="1">
    <original>A</original>
    <variation>R</variation>
    <location>
        <position position="144"/>
    </location>
</feature>
<feature type="sequence conflict" description="In Ref. 1; BAA05055." evidence="3" ref="1">
    <original>G</original>
    <variation>V</variation>
    <location>
        <position position="147"/>
    </location>
</feature>
<feature type="sequence conflict" description="In Ref. 1; BAA05055." evidence="3" ref="1">
    <original>V</original>
    <variation>D</variation>
    <location>
        <position position="182"/>
    </location>
</feature>
<feature type="sequence conflict" description="In Ref. 1; BAA05055." evidence="3" ref="1">
    <original>A</original>
    <variation>V</variation>
    <location>
        <position position="198"/>
    </location>
</feature>
<feature type="sequence conflict" description="In Ref. 1; BAA05055." evidence="3" ref="1">
    <original>F</original>
    <variation>Y</variation>
    <location>
        <position position="227"/>
    </location>
</feature>
<feature type="sequence conflict" description="In Ref. 1; BAA05055." evidence="3" ref="1">
    <original>L</original>
    <variation>Y</variation>
    <location>
        <position position="447"/>
    </location>
</feature>
<feature type="sequence conflict" description="In Ref. 1; BAA05055." evidence="3" ref="1">
    <original>AILD</original>
    <variation>GKYLT</variation>
    <location>
        <begin position="454"/>
        <end position="457"/>
    </location>
</feature>
<organism>
    <name type="scientific">Salmonella typhimurium (strain LT2 / SGSC1412 / ATCC 700720)</name>
    <dbReference type="NCBI Taxonomy" id="99287"/>
    <lineage>
        <taxon>Bacteria</taxon>
        <taxon>Pseudomonadati</taxon>
        <taxon>Pseudomonadota</taxon>
        <taxon>Gammaproteobacteria</taxon>
        <taxon>Enterobacterales</taxon>
        <taxon>Enterobacteriaceae</taxon>
        <taxon>Salmonella</taxon>
    </lineage>
</organism>
<gene>
    <name type="primary">smvA</name>
    <name type="ordered locus">STM1574</name>
</gene>
<keyword id="KW-0997">Cell inner membrane</keyword>
<keyword id="KW-1003">Cell membrane</keyword>
<keyword id="KW-0472">Membrane</keyword>
<keyword id="KW-1185">Reference proteome</keyword>
<keyword id="KW-0812">Transmembrane</keyword>
<keyword id="KW-1133">Transmembrane helix</keyword>
<keyword id="KW-0813">Transport</keyword>
<name>SMVA_SALTY</name>
<comment type="function">
    <text evidence="1">Major efflux pump for acriflavine and other quaternary ammonium compounds (QACs). Also required for resistance to methyl viologen (By similarity).</text>
</comment>
<comment type="subcellular location">
    <subcellularLocation>
        <location evidence="3">Cell inner membrane</location>
        <topology evidence="3">Multi-pass membrane protein</topology>
    </subcellularLocation>
</comment>
<comment type="similarity">
    <text evidence="3">Belongs to the major facilitator superfamily. TCR/Tet family.</text>
</comment>
<evidence type="ECO:0000250" key="1"/>
<evidence type="ECO:0000255" key="2"/>
<evidence type="ECO:0000305" key="3"/>
<reference key="1">
    <citation type="journal article" date="1994" name="Gene">
        <title>The methyl viologen-resistance-encoding gene smvA of Salmonella typhimurium.</title>
        <authorList>
            <person name="Hongo E."/>
            <person name="Morimyo M."/>
            <person name="Mita K."/>
            <person name="Machida I."/>
            <person name="Hama-Inaba H."/>
            <person name="Tsuji H."/>
            <person name="Ichimura S."/>
            <person name="Noda Y."/>
        </authorList>
    </citation>
    <scope>NUCLEOTIDE SEQUENCE [GENOMIC DNA]</scope>
    <source>
        <strain>SL1303</strain>
    </source>
</reference>
<reference key="2">
    <citation type="journal article" date="2001" name="Nature">
        <title>Complete genome sequence of Salmonella enterica serovar Typhimurium LT2.</title>
        <authorList>
            <person name="McClelland M."/>
            <person name="Sanderson K.E."/>
            <person name="Spieth J."/>
            <person name="Clifton S.W."/>
            <person name="Latreille P."/>
            <person name="Courtney L."/>
            <person name="Porwollik S."/>
            <person name="Ali J."/>
            <person name="Dante M."/>
            <person name="Du F."/>
            <person name="Hou S."/>
            <person name="Layman D."/>
            <person name="Leonard S."/>
            <person name="Nguyen C."/>
            <person name="Scott K."/>
            <person name="Holmes A."/>
            <person name="Grewal N."/>
            <person name="Mulvaney E."/>
            <person name="Ryan E."/>
            <person name="Sun H."/>
            <person name="Florea L."/>
            <person name="Miller W."/>
            <person name="Stoneking T."/>
            <person name="Nhan M."/>
            <person name="Waterston R."/>
            <person name="Wilson R.K."/>
        </authorList>
    </citation>
    <scope>NUCLEOTIDE SEQUENCE [LARGE SCALE GENOMIC DNA]</scope>
    <source>
        <strain>LT2 / SGSC1412 / ATCC 700720</strain>
    </source>
</reference>
<proteinExistence type="inferred from homology"/>
<sequence>MFRQWLTLVIIVLVYIPVAIDATVLHVAAPTLSMTLGASGNELLWIIDIYSLVMAGMVLPMGALGDRIGFKRLLMLGGTLFGLASLAAAFSHTASWLIATRVLLAIGAAMIVPATLAGIRATFCEEKHRNMALGVWAAVGSGGAAFGPLIGGILLEHFYWGSVFLINVPIVLVVMGLTARYVPRQAGRRDQPLNLGHAVMLIIAILLLVYSAKTALKGHLSLWVISFTLLTGALLLGLFIRTQLATSRPMIDMRLFTHRIILSGVVMAMTAMITLVGFELLMAQELQFVHGLSPYEAGVFMLPVMVASGFSGPIAGVLVSRLGLRLVATGGMALSALSFYGLAMTDFSTQQWQAWGLMALLGFSAASALLASTSAIMAAAPAEKAAAAGAIETMAYELGAGLGIAIFGLLLSRSFSASIRLPAGLEAQEIARASSSMGEAVQLANSLPPTQGQAILDAARHAFIWSHSVALSSAGSMLLLLAVGMWFSLAKAQRR</sequence>